<organism>
    <name type="scientific">Sulfolobus acidocaldarius (strain ATCC 33909 / DSM 639 / JCM 8929 / NBRC 15157 / NCIMB 11770)</name>
    <dbReference type="NCBI Taxonomy" id="330779"/>
    <lineage>
        <taxon>Archaea</taxon>
        <taxon>Thermoproteota</taxon>
        <taxon>Thermoprotei</taxon>
        <taxon>Sulfolobales</taxon>
        <taxon>Sulfolobaceae</taxon>
        <taxon>Sulfolobus</taxon>
    </lineage>
</organism>
<evidence type="ECO:0000250" key="1"/>
<evidence type="ECO:0000305" key="2"/>
<evidence type="ECO:0007829" key="3">
    <source>
        <dbReference type="PDB" id="1PG5"/>
    </source>
</evidence>
<gene>
    <name type="primary">pyrI</name>
    <name type="ordered locus">Saci_1595</name>
</gene>
<proteinExistence type="evidence at protein level"/>
<protein>
    <recommendedName>
        <fullName>Aspartate carbamoyltransferase regulatory chain</fullName>
    </recommendedName>
</protein>
<reference key="1">
    <citation type="submission" date="1996-09" db="EMBL/GenBank/DDBJ databases">
        <authorList>
            <person name="Durbecq V."/>
            <person name="Thia-Toong T.-L."/>
            <person name="Roovers M."/>
            <person name="Legrain C."/>
            <person name="Glansdorff N."/>
            <person name="Charlier D.R.M."/>
        </authorList>
    </citation>
    <scope>NUCLEOTIDE SEQUENCE [GENOMIC DNA]</scope>
    <source>
        <strain>ATCC 33909 / DSM 639 / JCM 8929 / NBRC 15157 / NCIMB 11770</strain>
    </source>
</reference>
<reference key="2">
    <citation type="journal article" date="2002" name="J. Bacteriol.">
        <title>Genes of de novo pyrimidine biosynthesis from the hyperthermoacidophilic crenarchaeote Sulfolobus acidocaldarius: novel organization in a bipolar operon.</title>
        <authorList>
            <person name="Thia-Toong T.-L."/>
            <person name="Roovers M."/>
            <person name="Durbecq V."/>
            <person name="Gigot D."/>
            <person name="Glansdorff N."/>
            <person name="Charlier D.R.M."/>
        </authorList>
    </citation>
    <scope>NUCLEOTIDE SEQUENCE [GENOMIC DNA]</scope>
    <source>
        <strain>ATCC 33909 / DSM 639 / JCM 8929 / NBRC 15157 / NCIMB 11770</strain>
    </source>
</reference>
<reference key="3">
    <citation type="journal article" date="2005" name="J. Bacteriol.">
        <title>The genome of Sulfolobus acidocaldarius, a model organism of the Crenarchaeota.</title>
        <authorList>
            <person name="Chen L."/>
            <person name="Bruegger K."/>
            <person name="Skovgaard M."/>
            <person name="Redder P."/>
            <person name="She Q."/>
            <person name="Torarinsson E."/>
            <person name="Greve B."/>
            <person name="Awayez M."/>
            <person name="Zibat A."/>
            <person name="Klenk H.-P."/>
            <person name="Garrett R.A."/>
        </authorList>
    </citation>
    <scope>NUCLEOTIDE SEQUENCE [LARGE SCALE GENOMIC DNA]</scope>
    <source>
        <strain>ATCC 33909 / DSM 639 / JCM 8929 / NBRC 15157 / NCIMB 11770</strain>
    </source>
</reference>
<comment type="function">
    <text evidence="1">Involved in allosteric regulation of aspartate carbamoyltransferase.</text>
</comment>
<comment type="cofactor">
    <cofactor evidence="1">
        <name>Zn(2+)</name>
        <dbReference type="ChEBI" id="CHEBI:29105"/>
    </cofactor>
    <text evidence="1">Binds 1 zinc ion per subunit.</text>
</comment>
<comment type="subunit">
    <text evidence="1">Contains catalytic and regulatory chains.</text>
</comment>
<comment type="similarity">
    <text evidence="2">Belongs to the PyrI family.</text>
</comment>
<feature type="chain" id="PRO_0000142342" description="Aspartate carbamoyltransferase regulatory chain">
    <location>
        <begin position="1"/>
        <end position="164"/>
    </location>
</feature>
<feature type="binding site" evidence="1">
    <location>
        <position position="113"/>
    </location>
    <ligand>
        <name>Zn(2+)</name>
        <dbReference type="ChEBI" id="CHEBI:29105"/>
    </ligand>
</feature>
<feature type="binding site" evidence="1">
    <location>
        <position position="118"/>
    </location>
    <ligand>
        <name>Zn(2+)</name>
        <dbReference type="ChEBI" id="CHEBI:29105"/>
    </ligand>
</feature>
<feature type="binding site" evidence="1">
    <location>
        <position position="142"/>
    </location>
    <ligand>
        <name>Zn(2+)</name>
        <dbReference type="ChEBI" id="CHEBI:29105"/>
    </ligand>
</feature>
<feature type="binding site" evidence="1">
    <location>
        <position position="145"/>
    </location>
    <ligand>
        <name>Zn(2+)</name>
        <dbReference type="ChEBI" id="CHEBI:29105"/>
    </ligand>
</feature>
<feature type="strand" evidence="3">
    <location>
        <begin position="16"/>
        <end position="25"/>
    </location>
</feature>
<feature type="helix" evidence="3">
    <location>
        <begin position="29"/>
        <end position="35"/>
    </location>
</feature>
<feature type="strand" evidence="3">
    <location>
        <begin position="46"/>
        <end position="54"/>
    </location>
</feature>
<feature type="turn" evidence="3">
    <location>
        <begin position="55"/>
        <end position="57"/>
    </location>
</feature>
<feature type="strand" evidence="3">
    <location>
        <begin position="58"/>
        <end position="66"/>
    </location>
</feature>
<feature type="helix" evidence="3">
    <location>
        <begin position="72"/>
        <end position="78"/>
    </location>
</feature>
<feature type="turn" evidence="3">
    <location>
        <begin position="79"/>
        <end position="81"/>
    </location>
</feature>
<feature type="strand" evidence="3">
    <location>
        <begin position="86"/>
        <end position="91"/>
    </location>
</feature>
<feature type="strand" evidence="3">
    <location>
        <begin position="94"/>
        <end position="99"/>
    </location>
</feature>
<feature type="strand" evidence="3">
    <location>
        <begin position="105"/>
        <end position="111"/>
    </location>
</feature>
<feature type="helix" evidence="3">
    <location>
        <begin position="119"/>
        <end position="121"/>
    </location>
</feature>
<feature type="strand" evidence="3">
    <location>
        <begin position="129"/>
        <end position="134"/>
    </location>
</feature>
<feature type="turn" evidence="3">
    <location>
        <begin position="135"/>
        <end position="138"/>
    </location>
</feature>
<feature type="strand" evidence="3">
    <location>
        <begin position="139"/>
        <end position="142"/>
    </location>
</feature>
<feature type="turn" evidence="3">
    <location>
        <begin position="143"/>
        <end position="145"/>
    </location>
</feature>
<feature type="strand" evidence="3">
    <location>
        <begin position="148"/>
        <end position="150"/>
    </location>
</feature>
<feature type="helix" evidence="3">
    <location>
        <begin position="151"/>
        <end position="158"/>
    </location>
</feature>
<accession>P74766</accession>
<accession>Q4J8H2</accession>
<keyword id="KW-0002">3D-structure</keyword>
<keyword id="KW-0479">Metal-binding</keyword>
<keyword id="KW-0665">Pyrimidine biosynthesis</keyword>
<keyword id="KW-1185">Reference proteome</keyword>
<keyword id="KW-0862">Zinc</keyword>
<sequence>MEIQGNRKELMVSKIKNGTVIDHIPAGRAFAVLNVLGIKGHEGFRIALVINVDSKKMGKKDIVKIEDKEISDTEANLITLIAPTATINIVREYEVVKKTKLEVPKVVKGILKCPNPYCITSNDVEAIPTFKTLTEKPLKMRCEYCETIIDENEIMSQILGANNK</sequence>
<name>PYRI_SULAC</name>
<dbReference type="EMBL" id="Y08309">
    <property type="protein sequence ID" value="CAA69618.1"/>
    <property type="molecule type" value="Genomic_DNA"/>
</dbReference>
<dbReference type="EMBL" id="AJ459777">
    <property type="protein sequence ID" value="CAD31977.1"/>
    <property type="molecule type" value="Genomic_DNA"/>
</dbReference>
<dbReference type="EMBL" id="CP000077">
    <property type="protein sequence ID" value="AAY80908.1"/>
    <property type="molecule type" value="Genomic_DNA"/>
</dbReference>
<dbReference type="RefSeq" id="WP_011278410.1">
    <property type="nucleotide sequence ID" value="NC_007181.1"/>
</dbReference>
<dbReference type="PDB" id="1PG5">
    <property type="method" value="X-ray"/>
    <property type="resolution" value="2.60 A"/>
    <property type="chains" value="B=1-164"/>
</dbReference>
<dbReference type="PDB" id="2BE9">
    <property type="method" value="X-ray"/>
    <property type="resolution" value="2.60 A"/>
    <property type="chains" value="B=1-164"/>
</dbReference>
<dbReference type="PDBsum" id="1PG5"/>
<dbReference type="PDBsum" id="2BE9"/>
<dbReference type="SMR" id="P74766"/>
<dbReference type="IntAct" id="P74766">
    <property type="interactions" value="1"/>
</dbReference>
<dbReference type="STRING" id="330779.Saci_1595"/>
<dbReference type="GeneID" id="14552088"/>
<dbReference type="GeneID" id="78441938"/>
<dbReference type="KEGG" id="sai:Saci_1595"/>
<dbReference type="PATRIC" id="fig|330779.12.peg.1535"/>
<dbReference type="eggNOG" id="arCOG04229">
    <property type="taxonomic scope" value="Archaea"/>
</dbReference>
<dbReference type="HOGENOM" id="CLU_128576_0_0_2"/>
<dbReference type="EvolutionaryTrace" id="P74766"/>
<dbReference type="Proteomes" id="UP000001018">
    <property type="component" value="Chromosome"/>
</dbReference>
<dbReference type="GO" id="GO:0009347">
    <property type="term" value="C:aspartate carbamoyltransferase complex"/>
    <property type="evidence" value="ECO:0007669"/>
    <property type="project" value="InterPro"/>
</dbReference>
<dbReference type="GO" id="GO:0046872">
    <property type="term" value="F:metal ion binding"/>
    <property type="evidence" value="ECO:0007669"/>
    <property type="project" value="UniProtKB-KW"/>
</dbReference>
<dbReference type="GO" id="GO:0006207">
    <property type="term" value="P:'de novo' pyrimidine nucleobase biosynthetic process"/>
    <property type="evidence" value="ECO:0007669"/>
    <property type="project" value="InterPro"/>
</dbReference>
<dbReference type="GO" id="GO:0006221">
    <property type="term" value="P:pyrimidine nucleotide biosynthetic process"/>
    <property type="evidence" value="ECO:0007669"/>
    <property type="project" value="UniProtKB-UniRule"/>
</dbReference>
<dbReference type="Gene3D" id="2.30.30.20">
    <property type="entry name" value="Aspartate carbamoyltransferase regulatory subunit, C-terminal domain"/>
    <property type="match status" value="1"/>
</dbReference>
<dbReference type="Gene3D" id="3.30.70.140">
    <property type="entry name" value="Aspartate carbamoyltransferase regulatory subunit, N-terminal domain"/>
    <property type="match status" value="1"/>
</dbReference>
<dbReference type="HAMAP" id="MF_00002">
    <property type="entry name" value="Asp_carb_tr_reg"/>
    <property type="match status" value="1"/>
</dbReference>
<dbReference type="InterPro" id="IPR020545">
    <property type="entry name" value="Asp_carbamoyltransf_reg_N"/>
</dbReference>
<dbReference type="InterPro" id="IPR002801">
    <property type="entry name" value="Asp_carbamoylTrfase_reg"/>
</dbReference>
<dbReference type="InterPro" id="IPR020542">
    <property type="entry name" value="Asp_carbamoyltrfase_reg_C"/>
</dbReference>
<dbReference type="InterPro" id="IPR036792">
    <property type="entry name" value="Asp_carbatrfase_reg_C_sf"/>
</dbReference>
<dbReference type="InterPro" id="IPR036793">
    <property type="entry name" value="Asp_carbatrfase_reg_N_sf"/>
</dbReference>
<dbReference type="NCBIfam" id="TIGR00240">
    <property type="entry name" value="ATCase_reg"/>
    <property type="match status" value="1"/>
</dbReference>
<dbReference type="PANTHER" id="PTHR35805">
    <property type="entry name" value="ASPARTATE CARBAMOYLTRANSFERASE REGULATORY CHAIN"/>
    <property type="match status" value="1"/>
</dbReference>
<dbReference type="PANTHER" id="PTHR35805:SF1">
    <property type="entry name" value="ASPARTATE CARBAMOYLTRANSFERASE REGULATORY CHAIN"/>
    <property type="match status" value="1"/>
</dbReference>
<dbReference type="Pfam" id="PF01948">
    <property type="entry name" value="PyrI"/>
    <property type="match status" value="1"/>
</dbReference>
<dbReference type="Pfam" id="PF02748">
    <property type="entry name" value="PyrI_C"/>
    <property type="match status" value="1"/>
</dbReference>
<dbReference type="SUPFAM" id="SSF57825">
    <property type="entry name" value="Aspartate carbamoyltransferase, Regulatory-chain, C-terminal domain"/>
    <property type="match status" value="1"/>
</dbReference>
<dbReference type="SUPFAM" id="SSF54893">
    <property type="entry name" value="Aspartate carbamoyltransferase, Regulatory-chain, N-terminal domain"/>
    <property type="match status" value="1"/>
</dbReference>